<protein>
    <recommendedName>
        <fullName evidence="1">Probable transcriptional regulatory protein SPs1628</fullName>
    </recommendedName>
</protein>
<name>Y231_STRPQ</name>
<sequence>MGRKWANIVAKKTAKDGATSKVYAKFGVEIYVAAKQGEPDPELNTALKFVIDRAKQAQVPKHVIDKAIDKAKGNTDETFVEGRYEGFGPNGSMIIVDTLTSNVNRTAANVRTAYGKNGGNMGASGSVSYLFDKKGVIVFAGDDADSVFEQLLEADVDVDDVEAEEGTITVYTAPTDLHKGIQALRDNGVEEFQVTELEMIPQSEVVLEGDDLETFEKLIDALESDDDVQKVYHNVADF</sequence>
<comment type="subcellular location">
    <subcellularLocation>
        <location evidence="1">Cytoplasm</location>
    </subcellularLocation>
</comment>
<comment type="similarity">
    <text evidence="1">Belongs to the TACO1 family. YeeN subfamily.</text>
</comment>
<evidence type="ECO:0000255" key="1">
    <source>
        <dbReference type="HAMAP-Rule" id="MF_00918"/>
    </source>
</evidence>
<reference key="1">
    <citation type="journal article" date="2003" name="Genome Res.">
        <title>Genome sequence of an M3 strain of Streptococcus pyogenes reveals a large-scale genomic rearrangement in invasive strains and new insights into phage evolution.</title>
        <authorList>
            <person name="Nakagawa I."/>
            <person name="Kurokawa K."/>
            <person name="Yamashita A."/>
            <person name="Nakata M."/>
            <person name="Tomiyasu Y."/>
            <person name="Okahashi N."/>
            <person name="Kawabata S."/>
            <person name="Yamazaki K."/>
            <person name="Shiba T."/>
            <person name="Yasunaga T."/>
            <person name="Hayashi H."/>
            <person name="Hattori M."/>
            <person name="Hamada S."/>
        </authorList>
    </citation>
    <scope>NUCLEOTIDE SEQUENCE [LARGE SCALE GENOMIC DNA]</scope>
    <source>
        <strain>SSI-1</strain>
    </source>
</reference>
<organism>
    <name type="scientific">Streptococcus pyogenes serotype M3 (strain SSI-1)</name>
    <dbReference type="NCBI Taxonomy" id="193567"/>
    <lineage>
        <taxon>Bacteria</taxon>
        <taxon>Bacillati</taxon>
        <taxon>Bacillota</taxon>
        <taxon>Bacilli</taxon>
        <taxon>Lactobacillales</taxon>
        <taxon>Streptococcaceae</taxon>
        <taxon>Streptococcus</taxon>
    </lineage>
</organism>
<gene>
    <name type="ordered locus">SPs1628</name>
</gene>
<keyword id="KW-0963">Cytoplasm</keyword>
<keyword id="KW-0238">DNA-binding</keyword>
<keyword id="KW-0804">Transcription</keyword>
<keyword id="KW-0805">Transcription regulation</keyword>
<feature type="chain" id="PRO_0000411581" description="Probable transcriptional regulatory protein SPs1628">
    <location>
        <begin position="1"/>
        <end position="238"/>
    </location>
</feature>
<proteinExistence type="inferred from homology"/>
<dbReference type="EMBL" id="BA000034">
    <property type="protein sequence ID" value="BAC64723.1"/>
    <property type="molecule type" value="Genomic_DNA"/>
</dbReference>
<dbReference type="RefSeq" id="WP_002985979.1">
    <property type="nucleotide sequence ID" value="NC_004606.1"/>
</dbReference>
<dbReference type="SMR" id="P0DF83"/>
<dbReference type="KEGG" id="sps:SPs1628"/>
<dbReference type="HOGENOM" id="CLU_062974_2_0_9"/>
<dbReference type="GO" id="GO:0005829">
    <property type="term" value="C:cytosol"/>
    <property type="evidence" value="ECO:0007669"/>
    <property type="project" value="TreeGrafter"/>
</dbReference>
<dbReference type="GO" id="GO:0003677">
    <property type="term" value="F:DNA binding"/>
    <property type="evidence" value="ECO:0007669"/>
    <property type="project" value="UniProtKB-UniRule"/>
</dbReference>
<dbReference type="GO" id="GO:0006355">
    <property type="term" value="P:regulation of DNA-templated transcription"/>
    <property type="evidence" value="ECO:0007669"/>
    <property type="project" value="UniProtKB-UniRule"/>
</dbReference>
<dbReference type="FunFam" id="1.10.10.200:FF:000003">
    <property type="entry name" value="Probable transcriptional regulatory protein YeeN"/>
    <property type="match status" value="1"/>
</dbReference>
<dbReference type="FunFam" id="3.30.70.980:FF:000004">
    <property type="entry name" value="Probable transcriptional regulatory protein YeeN"/>
    <property type="match status" value="1"/>
</dbReference>
<dbReference type="Gene3D" id="1.10.10.200">
    <property type="match status" value="1"/>
</dbReference>
<dbReference type="Gene3D" id="3.30.70.980">
    <property type="match status" value="2"/>
</dbReference>
<dbReference type="HAMAP" id="MF_00693">
    <property type="entry name" value="Transcrip_reg_TACO1"/>
    <property type="match status" value="1"/>
</dbReference>
<dbReference type="HAMAP" id="MF_00918">
    <property type="entry name" value="Transcrip_reg_TACO1_YeeN"/>
    <property type="match status" value="1"/>
</dbReference>
<dbReference type="InterPro" id="IPR017856">
    <property type="entry name" value="Integrase-like_N"/>
</dbReference>
<dbReference type="InterPro" id="IPR048300">
    <property type="entry name" value="TACO1_YebC-like_2nd/3rd_dom"/>
</dbReference>
<dbReference type="InterPro" id="IPR049083">
    <property type="entry name" value="TACO1_YebC_N"/>
</dbReference>
<dbReference type="InterPro" id="IPR002876">
    <property type="entry name" value="Transcrip_reg_TACO1-like"/>
</dbReference>
<dbReference type="InterPro" id="IPR026564">
    <property type="entry name" value="Transcrip_reg_TACO1-like_dom3"/>
</dbReference>
<dbReference type="InterPro" id="IPR026562">
    <property type="entry name" value="Transcrip_reg_TACO1_YeeN"/>
</dbReference>
<dbReference type="InterPro" id="IPR029072">
    <property type="entry name" value="YebC-like"/>
</dbReference>
<dbReference type="NCBIfam" id="NF001030">
    <property type="entry name" value="PRK00110.1"/>
    <property type="match status" value="1"/>
</dbReference>
<dbReference type="NCBIfam" id="NF009044">
    <property type="entry name" value="PRK12378.1"/>
    <property type="match status" value="1"/>
</dbReference>
<dbReference type="NCBIfam" id="TIGR01033">
    <property type="entry name" value="YebC/PmpR family DNA-binding transcriptional regulator"/>
    <property type="match status" value="1"/>
</dbReference>
<dbReference type="PANTHER" id="PTHR12532">
    <property type="entry name" value="TRANSLATIONAL ACTIVATOR OF CYTOCHROME C OXIDASE 1"/>
    <property type="match status" value="1"/>
</dbReference>
<dbReference type="PANTHER" id="PTHR12532:SF0">
    <property type="entry name" value="TRANSLATIONAL ACTIVATOR OF CYTOCHROME C OXIDASE 1"/>
    <property type="match status" value="1"/>
</dbReference>
<dbReference type="Pfam" id="PF20772">
    <property type="entry name" value="TACO1_YebC_N"/>
    <property type="match status" value="1"/>
</dbReference>
<dbReference type="Pfam" id="PF01709">
    <property type="entry name" value="Transcrip_reg"/>
    <property type="match status" value="1"/>
</dbReference>
<dbReference type="SUPFAM" id="SSF75625">
    <property type="entry name" value="YebC-like"/>
    <property type="match status" value="1"/>
</dbReference>
<accession>P0DF83</accession>
<accession>P67189</accession>
<accession>Q9A1E6</accession>